<keyword id="KW-0997">Cell inner membrane</keyword>
<keyword id="KW-1003">Cell membrane</keyword>
<keyword id="KW-0407">Ion channel</keyword>
<keyword id="KW-0406">Ion transport</keyword>
<keyword id="KW-0472">Membrane</keyword>
<keyword id="KW-0479">Metal-binding</keyword>
<keyword id="KW-0915">Sodium</keyword>
<keyword id="KW-0812">Transmembrane</keyword>
<keyword id="KW-1133">Transmembrane helix</keyword>
<keyword id="KW-0813">Transport</keyword>
<accession>A4STL2</accession>
<dbReference type="EMBL" id="CP000644">
    <property type="protein sequence ID" value="ABO92234.1"/>
    <property type="molecule type" value="Genomic_DNA"/>
</dbReference>
<dbReference type="RefSeq" id="WP_005320732.1">
    <property type="nucleotide sequence ID" value="NC_009348.1"/>
</dbReference>
<dbReference type="SMR" id="A4STL2"/>
<dbReference type="STRING" id="29491.GCA_000820065_02787"/>
<dbReference type="GeneID" id="79881999"/>
<dbReference type="KEGG" id="asa:ASA_4310"/>
<dbReference type="eggNOG" id="COG0239">
    <property type="taxonomic scope" value="Bacteria"/>
</dbReference>
<dbReference type="HOGENOM" id="CLU_114342_3_0_6"/>
<dbReference type="Proteomes" id="UP000000225">
    <property type="component" value="Chromosome"/>
</dbReference>
<dbReference type="GO" id="GO:0005886">
    <property type="term" value="C:plasma membrane"/>
    <property type="evidence" value="ECO:0007669"/>
    <property type="project" value="UniProtKB-SubCell"/>
</dbReference>
<dbReference type="GO" id="GO:0062054">
    <property type="term" value="F:fluoride channel activity"/>
    <property type="evidence" value="ECO:0007669"/>
    <property type="project" value="UniProtKB-UniRule"/>
</dbReference>
<dbReference type="GO" id="GO:0046872">
    <property type="term" value="F:metal ion binding"/>
    <property type="evidence" value="ECO:0007669"/>
    <property type="project" value="UniProtKB-KW"/>
</dbReference>
<dbReference type="GO" id="GO:0140114">
    <property type="term" value="P:cellular detoxification of fluoride"/>
    <property type="evidence" value="ECO:0007669"/>
    <property type="project" value="UniProtKB-UniRule"/>
</dbReference>
<dbReference type="HAMAP" id="MF_00454">
    <property type="entry name" value="FluC"/>
    <property type="match status" value="1"/>
</dbReference>
<dbReference type="InterPro" id="IPR003691">
    <property type="entry name" value="FluC"/>
</dbReference>
<dbReference type="NCBIfam" id="TIGR00494">
    <property type="entry name" value="crcB"/>
    <property type="match status" value="1"/>
</dbReference>
<dbReference type="PANTHER" id="PTHR28259">
    <property type="entry name" value="FLUORIDE EXPORT PROTEIN 1-RELATED"/>
    <property type="match status" value="1"/>
</dbReference>
<dbReference type="PANTHER" id="PTHR28259:SF1">
    <property type="entry name" value="FLUORIDE EXPORT PROTEIN 1-RELATED"/>
    <property type="match status" value="1"/>
</dbReference>
<dbReference type="Pfam" id="PF02537">
    <property type="entry name" value="CRCB"/>
    <property type="match status" value="1"/>
</dbReference>
<comment type="function">
    <text evidence="1">Fluoride-specific ion channel. Important for reducing fluoride concentration in the cell, thus reducing its toxicity.</text>
</comment>
<comment type="catalytic activity">
    <reaction evidence="1">
        <text>fluoride(in) = fluoride(out)</text>
        <dbReference type="Rhea" id="RHEA:76159"/>
        <dbReference type="ChEBI" id="CHEBI:17051"/>
    </reaction>
    <physiologicalReaction direction="left-to-right" evidence="1">
        <dbReference type="Rhea" id="RHEA:76160"/>
    </physiologicalReaction>
</comment>
<comment type="activity regulation">
    <text evidence="1">Na(+) is not transported, but it plays an essential structural role and its presence is essential for fluoride channel function.</text>
</comment>
<comment type="subcellular location">
    <subcellularLocation>
        <location evidence="1">Cell inner membrane</location>
        <topology evidence="1">Multi-pass membrane protein</topology>
    </subcellularLocation>
</comment>
<comment type="similarity">
    <text evidence="1">Belongs to the fluoride channel Fluc/FEX (TC 1.A.43) family.</text>
</comment>
<protein>
    <recommendedName>
        <fullName evidence="1">Fluoride-specific ion channel FluC</fullName>
    </recommendedName>
</protein>
<organism>
    <name type="scientific">Aeromonas salmonicida (strain A449)</name>
    <dbReference type="NCBI Taxonomy" id="382245"/>
    <lineage>
        <taxon>Bacteria</taxon>
        <taxon>Pseudomonadati</taxon>
        <taxon>Pseudomonadota</taxon>
        <taxon>Gammaproteobacteria</taxon>
        <taxon>Aeromonadales</taxon>
        <taxon>Aeromonadaceae</taxon>
        <taxon>Aeromonas</taxon>
    </lineage>
</organism>
<reference key="1">
    <citation type="journal article" date="2008" name="BMC Genomics">
        <title>The genome of Aeromonas salmonicida subsp. salmonicida A449: insights into the evolution of a fish pathogen.</title>
        <authorList>
            <person name="Reith M.E."/>
            <person name="Singh R.K."/>
            <person name="Curtis B."/>
            <person name="Boyd J.M."/>
            <person name="Bouevitch A."/>
            <person name="Kimball J."/>
            <person name="Munholland J."/>
            <person name="Murphy C."/>
            <person name="Sarty D."/>
            <person name="Williams J."/>
            <person name="Nash J.H."/>
            <person name="Johnson S.C."/>
            <person name="Brown L.L."/>
        </authorList>
    </citation>
    <scope>NUCLEOTIDE SEQUENCE [LARGE SCALE GENOMIC DNA]</scope>
    <source>
        <strain>A449</strain>
    </source>
</reference>
<proteinExistence type="inferred from homology"/>
<sequence length="125" mass="13188">MQTWLFVAAGGAIGACLRFGISELMALLLGRHFPYGTLVVNVVGSFIMGIAFALISHGHVVEHPMKPLLMVGILGALTTFSSFALDTVVLAQQGAYLKAVLNMGLNLSLCLAMVLLGMQLVASRV</sequence>
<feature type="chain" id="PRO_1000026368" description="Fluoride-specific ion channel FluC">
    <location>
        <begin position="1"/>
        <end position="125"/>
    </location>
</feature>
<feature type="transmembrane region" description="Helical" evidence="1">
    <location>
        <begin position="4"/>
        <end position="24"/>
    </location>
</feature>
<feature type="transmembrane region" description="Helical" evidence="1">
    <location>
        <begin position="35"/>
        <end position="55"/>
    </location>
</feature>
<feature type="transmembrane region" description="Helical" evidence="1">
    <location>
        <begin position="69"/>
        <end position="89"/>
    </location>
</feature>
<feature type="transmembrane region" description="Helical" evidence="1">
    <location>
        <begin position="103"/>
        <end position="123"/>
    </location>
</feature>
<feature type="binding site" evidence="1">
    <location>
        <position position="75"/>
    </location>
    <ligand>
        <name>Na(+)</name>
        <dbReference type="ChEBI" id="CHEBI:29101"/>
        <note>structural</note>
    </ligand>
</feature>
<feature type="binding site" evidence="1">
    <location>
        <position position="78"/>
    </location>
    <ligand>
        <name>Na(+)</name>
        <dbReference type="ChEBI" id="CHEBI:29101"/>
        <note>structural</note>
    </ligand>
</feature>
<evidence type="ECO:0000255" key="1">
    <source>
        <dbReference type="HAMAP-Rule" id="MF_00454"/>
    </source>
</evidence>
<gene>
    <name evidence="1" type="primary">fluC</name>
    <name evidence="1" type="synonym">crcB</name>
    <name type="ordered locus">ASA_4310</name>
</gene>
<name>FLUC_AERS4</name>